<organism>
    <name type="scientific">Xylella fastidiosa (strain M23)</name>
    <dbReference type="NCBI Taxonomy" id="405441"/>
    <lineage>
        <taxon>Bacteria</taxon>
        <taxon>Pseudomonadati</taxon>
        <taxon>Pseudomonadota</taxon>
        <taxon>Gammaproteobacteria</taxon>
        <taxon>Lysobacterales</taxon>
        <taxon>Lysobacteraceae</taxon>
        <taxon>Xylella</taxon>
    </lineage>
</organism>
<name>LEUC_XYLF2</name>
<feature type="chain" id="PRO_1000135721" description="3-isopropylmalate dehydratase large subunit">
    <location>
        <begin position="1"/>
        <end position="474"/>
    </location>
</feature>
<feature type="binding site" evidence="1">
    <location>
        <position position="353"/>
    </location>
    <ligand>
        <name>[4Fe-4S] cluster</name>
        <dbReference type="ChEBI" id="CHEBI:49883"/>
    </ligand>
</feature>
<feature type="binding site" evidence="1">
    <location>
        <position position="414"/>
    </location>
    <ligand>
        <name>[4Fe-4S] cluster</name>
        <dbReference type="ChEBI" id="CHEBI:49883"/>
    </ligand>
</feature>
<feature type="binding site" evidence="1">
    <location>
        <position position="417"/>
    </location>
    <ligand>
        <name>[4Fe-4S] cluster</name>
        <dbReference type="ChEBI" id="CHEBI:49883"/>
    </ligand>
</feature>
<accession>B2I6I6</accession>
<proteinExistence type="inferred from homology"/>
<gene>
    <name evidence="1" type="primary">leuC</name>
    <name type="ordered locus">XfasM23_1485</name>
</gene>
<sequence>MAGKTLYGKLWDIHEVARRDDGSSLIYIDRHILHEVTSPQAFEGLRLAGRPLWRVNANIATPDHNVPTTKAERQGSLLSIADTVSRLQVQTLDENCDDFGIFEFKMNDVRQGIVHVIGPEQGATLPGMTVVCGDSHTSTHGAFGALAHGIGTSEVEHVLATQCLVTQKMKNMQVRVEGTLPWGVTAKDIVLALIGKIGTAGGNGYAVEFSGSTIRALSMEGRMTICNMAIEAGARVGMVAVDEKTIQYVHGRPFAPKGSDWDAAVAFWRGLVSDPDAHFDRVVELSAEEIKPQVTWGTSPEMVSAVDQSVPDPERETDPVKKESLIRALKYMGLQPNDPITSIKLDRVFIGSCTNSRIEDLRAAAEVVKGRKVASTVKQAMVVPGSGLVKAQAEVEGLDKIFIEAGFEWREPGCSMCLAMNPDKLGSGEHCASTSNRNFEGRQGIGGRTHLVSPAMAAAAAVAGHFVDVREMMR</sequence>
<evidence type="ECO:0000255" key="1">
    <source>
        <dbReference type="HAMAP-Rule" id="MF_01026"/>
    </source>
</evidence>
<protein>
    <recommendedName>
        <fullName evidence="1">3-isopropylmalate dehydratase large subunit</fullName>
        <ecNumber evidence="1">4.2.1.33</ecNumber>
    </recommendedName>
    <alternativeName>
        <fullName evidence="1">Alpha-IPM isomerase</fullName>
        <shortName evidence="1">IPMI</shortName>
    </alternativeName>
    <alternativeName>
        <fullName evidence="1">Isopropylmalate isomerase</fullName>
    </alternativeName>
</protein>
<keyword id="KW-0004">4Fe-4S</keyword>
<keyword id="KW-0028">Amino-acid biosynthesis</keyword>
<keyword id="KW-0100">Branched-chain amino acid biosynthesis</keyword>
<keyword id="KW-0408">Iron</keyword>
<keyword id="KW-0411">Iron-sulfur</keyword>
<keyword id="KW-0432">Leucine biosynthesis</keyword>
<keyword id="KW-0456">Lyase</keyword>
<keyword id="KW-0479">Metal-binding</keyword>
<reference key="1">
    <citation type="journal article" date="2010" name="J. Bacteriol.">
        <title>Whole genome sequences of two Xylella fastidiosa strains (M12 and M23) causing almond leaf scorch disease in California.</title>
        <authorList>
            <person name="Chen J."/>
            <person name="Xie G."/>
            <person name="Han S."/>
            <person name="Chertkov O."/>
            <person name="Sims D."/>
            <person name="Civerolo E.L."/>
        </authorList>
    </citation>
    <scope>NUCLEOTIDE SEQUENCE [LARGE SCALE GENOMIC DNA]</scope>
    <source>
        <strain>M23</strain>
    </source>
</reference>
<comment type="function">
    <text evidence="1">Catalyzes the isomerization between 2-isopropylmalate and 3-isopropylmalate, via the formation of 2-isopropylmaleate.</text>
</comment>
<comment type="catalytic activity">
    <reaction evidence="1">
        <text>(2R,3S)-3-isopropylmalate = (2S)-2-isopropylmalate</text>
        <dbReference type="Rhea" id="RHEA:32287"/>
        <dbReference type="ChEBI" id="CHEBI:1178"/>
        <dbReference type="ChEBI" id="CHEBI:35121"/>
        <dbReference type="EC" id="4.2.1.33"/>
    </reaction>
</comment>
<comment type="cofactor">
    <cofactor evidence="1">
        <name>[4Fe-4S] cluster</name>
        <dbReference type="ChEBI" id="CHEBI:49883"/>
    </cofactor>
    <text evidence="1">Binds 1 [4Fe-4S] cluster per subunit.</text>
</comment>
<comment type="pathway">
    <text evidence="1">Amino-acid biosynthesis; L-leucine biosynthesis; L-leucine from 3-methyl-2-oxobutanoate: step 2/4.</text>
</comment>
<comment type="subunit">
    <text evidence="1">Heterodimer of LeuC and LeuD.</text>
</comment>
<comment type="similarity">
    <text evidence="1">Belongs to the aconitase/IPM isomerase family. LeuC type 1 subfamily.</text>
</comment>
<dbReference type="EC" id="4.2.1.33" evidence="1"/>
<dbReference type="EMBL" id="CP001011">
    <property type="protein sequence ID" value="ACB92896.1"/>
    <property type="molecule type" value="Genomic_DNA"/>
</dbReference>
<dbReference type="RefSeq" id="WP_004091001.1">
    <property type="nucleotide sequence ID" value="NC_010577.1"/>
</dbReference>
<dbReference type="SMR" id="B2I6I6"/>
<dbReference type="GeneID" id="93905215"/>
<dbReference type="KEGG" id="xfn:XfasM23_1485"/>
<dbReference type="HOGENOM" id="CLU_006714_3_4_6"/>
<dbReference type="UniPathway" id="UPA00048">
    <property type="reaction ID" value="UER00071"/>
</dbReference>
<dbReference type="Proteomes" id="UP000001698">
    <property type="component" value="Chromosome"/>
</dbReference>
<dbReference type="GO" id="GO:0003861">
    <property type="term" value="F:3-isopropylmalate dehydratase activity"/>
    <property type="evidence" value="ECO:0007669"/>
    <property type="project" value="UniProtKB-UniRule"/>
</dbReference>
<dbReference type="GO" id="GO:0051539">
    <property type="term" value="F:4 iron, 4 sulfur cluster binding"/>
    <property type="evidence" value="ECO:0007669"/>
    <property type="project" value="UniProtKB-KW"/>
</dbReference>
<dbReference type="GO" id="GO:0046872">
    <property type="term" value="F:metal ion binding"/>
    <property type="evidence" value="ECO:0007669"/>
    <property type="project" value="UniProtKB-KW"/>
</dbReference>
<dbReference type="GO" id="GO:0009098">
    <property type="term" value="P:L-leucine biosynthetic process"/>
    <property type="evidence" value="ECO:0007669"/>
    <property type="project" value="UniProtKB-UniRule"/>
</dbReference>
<dbReference type="CDD" id="cd01583">
    <property type="entry name" value="IPMI"/>
    <property type="match status" value="1"/>
</dbReference>
<dbReference type="FunFam" id="3.30.499.10:FF:000007">
    <property type="entry name" value="3-isopropylmalate dehydratase large subunit"/>
    <property type="match status" value="1"/>
</dbReference>
<dbReference type="Gene3D" id="3.30.499.10">
    <property type="entry name" value="Aconitase, domain 3"/>
    <property type="match status" value="2"/>
</dbReference>
<dbReference type="HAMAP" id="MF_01026">
    <property type="entry name" value="LeuC_type1"/>
    <property type="match status" value="1"/>
</dbReference>
<dbReference type="InterPro" id="IPR004430">
    <property type="entry name" value="3-IsopropMal_deHydase_lsu"/>
</dbReference>
<dbReference type="InterPro" id="IPR015931">
    <property type="entry name" value="Acnase/IPM_dHydase_lsu_aba_1/3"/>
</dbReference>
<dbReference type="InterPro" id="IPR001030">
    <property type="entry name" value="Acoase/IPM_deHydtase_lsu_aba"/>
</dbReference>
<dbReference type="InterPro" id="IPR018136">
    <property type="entry name" value="Aconitase_4Fe-4S_BS"/>
</dbReference>
<dbReference type="InterPro" id="IPR036008">
    <property type="entry name" value="Aconitase_4Fe-4S_dom"/>
</dbReference>
<dbReference type="InterPro" id="IPR050067">
    <property type="entry name" value="IPM_dehydratase_rel_enz"/>
</dbReference>
<dbReference type="InterPro" id="IPR033941">
    <property type="entry name" value="IPMI_cat"/>
</dbReference>
<dbReference type="NCBIfam" id="TIGR00170">
    <property type="entry name" value="leuC"/>
    <property type="match status" value="1"/>
</dbReference>
<dbReference type="NCBIfam" id="NF004016">
    <property type="entry name" value="PRK05478.1"/>
    <property type="match status" value="1"/>
</dbReference>
<dbReference type="NCBIfam" id="NF009116">
    <property type="entry name" value="PRK12466.1"/>
    <property type="match status" value="1"/>
</dbReference>
<dbReference type="PANTHER" id="PTHR43822:SF9">
    <property type="entry name" value="3-ISOPROPYLMALATE DEHYDRATASE"/>
    <property type="match status" value="1"/>
</dbReference>
<dbReference type="PANTHER" id="PTHR43822">
    <property type="entry name" value="HOMOACONITASE, MITOCHONDRIAL-RELATED"/>
    <property type="match status" value="1"/>
</dbReference>
<dbReference type="Pfam" id="PF00330">
    <property type="entry name" value="Aconitase"/>
    <property type="match status" value="1"/>
</dbReference>
<dbReference type="PRINTS" id="PR00415">
    <property type="entry name" value="ACONITASE"/>
</dbReference>
<dbReference type="SUPFAM" id="SSF53732">
    <property type="entry name" value="Aconitase iron-sulfur domain"/>
    <property type="match status" value="1"/>
</dbReference>
<dbReference type="PROSITE" id="PS00450">
    <property type="entry name" value="ACONITASE_1"/>
    <property type="match status" value="1"/>
</dbReference>
<dbReference type="PROSITE" id="PS01244">
    <property type="entry name" value="ACONITASE_2"/>
    <property type="match status" value="1"/>
</dbReference>